<gene>
    <name evidence="2" type="primary">aroL</name>
    <name type="ordered locus">Z0484</name>
    <name type="ordered locus">ECs0438</name>
</gene>
<name>AROL_ECO57</name>
<sequence>MTQPLFLIGPRGCGKTTVGMALADSLNRRFVDTDQWLQSQLNMTVAEIVEREEWAGFRARETAALEAVTAPSTVIATGGGIILTEFNRHFMQNNGIVVYLCAPVSVLVNRLQAAPEEDLRPTLTGKPLSEEVQEVLEERDALYREVAHIIIDATNEPSQVISEIRSALAQTINC</sequence>
<proteinExistence type="inferred from homology"/>
<comment type="function">
    <text evidence="2">Catalyzes the specific phosphorylation of the 3-hydroxyl group of shikimic acid using ATP as a cosubstrate.</text>
</comment>
<comment type="catalytic activity">
    <reaction evidence="2">
        <text>shikimate + ATP = 3-phosphoshikimate + ADP + H(+)</text>
        <dbReference type="Rhea" id="RHEA:13121"/>
        <dbReference type="ChEBI" id="CHEBI:15378"/>
        <dbReference type="ChEBI" id="CHEBI:30616"/>
        <dbReference type="ChEBI" id="CHEBI:36208"/>
        <dbReference type="ChEBI" id="CHEBI:145989"/>
        <dbReference type="ChEBI" id="CHEBI:456216"/>
        <dbReference type="EC" id="2.7.1.71"/>
    </reaction>
</comment>
<comment type="cofactor">
    <cofactor evidence="2">
        <name>Mg(2+)</name>
        <dbReference type="ChEBI" id="CHEBI:18420"/>
    </cofactor>
    <text evidence="2">Binds 1 Mg(2+) ion per subunit.</text>
</comment>
<comment type="pathway">
    <text evidence="2">Metabolic intermediate biosynthesis; chorismate biosynthesis; chorismate from D-erythrose 4-phosphate and phosphoenolpyruvate: step 5/7.</text>
</comment>
<comment type="subunit">
    <text evidence="2">Monomer.</text>
</comment>
<comment type="subcellular location">
    <subcellularLocation>
        <location evidence="2">Cytoplasm</location>
    </subcellularLocation>
</comment>
<comment type="domain">
    <text evidence="2">The LID domain closes over the active site upon ATP binding.</text>
</comment>
<comment type="similarity">
    <text evidence="2">Belongs to the shikimate kinase family. AroL subfamily.</text>
</comment>
<accession>P0A6E3</accession>
<accession>P08329</accession>
<protein>
    <recommendedName>
        <fullName evidence="2">Shikimate kinase 2</fullName>
        <shortName evidence="2">SK 2</shortName>
        <ecNumber evidence="2">2.7.1.71</ecNumber>
    </recommendedName>
</protein>
<organism>
    <name type="scientific">Escherichia coli O157:H7</name>
    <dbReference type="NCBI Taxonomy" id="83334"/>
    <lineage>
        <taxon>Bacteria</taxon>
        <taxon>Pseudomonadati</taxon>
        <taxon>Pseudomonadota</taxon>
        <taxon>Gammaproteobacteria</taxon>
        <taxon>Enterobacterales</taxon>
        <taxon>Enterobacteriaceae</taxon>
        <taxon>Escherichia</taxon>
    </lineage>
</organism>
<evidence type="ECO:0000250" key="1"/>
<evidence type="ECO:0000255" key="2">
    <source>
        <dbReference type="HAMAP-Rule" id="MF_01269"/>
    </source>
</evidence>
<dbReference type="EC" id="2.7.1.71" evidence="2"/>
<dbReference type="EMBL" id="AE005174">
    <property type="protein sequence ID" value="AAG54734.1"/>
    <property type="molecule type" value="Genomic_DNA"/>
</dbReference>
<dbReference type="EMBL" id="BA000007">
    <property type="protein sequence ID" value="BAB33861.1"/>
    <property type="molecule type" value="Genomic_DNA"/>
</dbReference>
<dbReference type="PIR" id="B85534">
    <property type="entry name" value="B85534"/>
</dbReference>
<dbReference type="PIR" id="F90683">
    <property type="entry name" value="F90683"/>
</dbReference>
<dbReference type="RefSeq" id="NP_308465.1">
    <property type="nucleotide sequence ID" value="NC_002695.1"/>
</dbReference>
<dbReference type="RefSeq" id="WP_000193393.1">
    <property type="nucleotide sequence ID" value="NZ_VOAI01000005.1"/>
</dbReference>
<dbReference type="SMR" id="P0A6E3"/>
<dbReference type="STRING" id="155864.Z0484"/>
<dbReference type="GeneID" id="914540"/>
<dbReference type="GeneID" id="93777073"/>
<dbReference type="KEGG" id="ece:Z0484"/>
<dbReference type="KEGG" id="ecs:ECs_0438"/>
<dbReference type="PATRIC" id="fig|386585.9.peg.534"/>
<dbReference type="eggNOG" id="COG0703">
    <property type="taxonomic scope" value="Bacteria"/>
</dbReference>
<dbReference type="HOGENOM" id="CLU_057607_4_3_6"/>
<dbReference type="OMA" id="DTDIFMQ"/>
<dbReference type="UniPathway" id="UPA00053">
    <property type="reaction ID" value="UER00088"/>
</dbReference>
<dbReference type="Proteomes" id="UP000000558">
    <property type="component" value="Chromosome"/>
</dbReference>
<dbReference type="Proteomes" id="UP000002519">
    <property type="component" value="Chromosome"/>
</dbReference>
<dbReference type="GO" id="GO:0005829">
    <property type="term" value="C:cytosol"/>
    <property type="evidence" value="ECO:0007669"/>
    <property type="project" value="TreeGrafter"/>
</dbReference>
<dbReference type="GO" id="GO:0005524">
    <property type="term" value="F:ATP binding"/>
    <property type="evidence" value="ECO:0007669"/>
    <property type="project" value="UniProtKB-UniRule"/>
</dbReference>
<dbReference type="GO" id="GO:0000287">
    <property type="term" value="F:magnesium ion binding"/>
    <property type="evidence" value="ECO:0007669"/>
    <property type="project" value="UniProtKB-UniRule"/>
</dbReference>
<dbReference type="GO" id="GO:0004765">
    <property type="term" value="F:shikimate kinase activity"/>
    <property type="evidence" value="ECO:0007669"/>
    <property type="project" value="UniProtKB-UniRule"/>
</dbReference>
<dbReference type="GO" id="GO:0008652">
    <property type="term" value="P:amino acid biosynthetic process"/>
    <property type="evidence" value="ECO:0007669"/>
    <property type="project" value="UniProtKB-KW"/>
</dbReference>
<dbReference type="GO" id="GO:0009073">
    <property type="term" value="P:aromatic amino acid family biosynthetic process"/>
    <property type="evidence" value="ECO:0007669"/>
    <property type="project" value="UniProtKB-KW"/>
</dbReference>
<dbReference type="GO" id="GO:0009423">
    <property type="term" value="P:chorismate biosynthetic process"/>
    <property type="evidence" value="ECO:0007669"/>
    <property type="project" value="UniProtKB-UniRule"/>
</dbReference>
<dbReference type="CDD" id="cd00464">
    <property type="entry name" value="SK"/>
    <property type="match status" value="1"/>
</dbReference>
<dbReference type="FunFam" id="3.40.50.300:FF:000408">
    <property type="entry name" value="Shikimate kinase 2"/>
    <property type="match status" value="1"/>
</dbReference>
<dbReference type="Gene3D" id="3.40.50.300">
    <property type="entry name" value="P-loop containing nucleotide triphosphate hydrolases"/>
    <property type="match status" value="1"/>
</dbReference>
<dbReference type="HAMAP" id="MF_00109">
    <property type="entry name" value="Shikimate_kinase"/>
    <property type="match status" value="1"/>
</dbReference>
<dbReference type="HAMAP" id="MF_01269">
    <property type="entry name" value="Shikimate_kinase_2"/>
    <property type="match status" value="1"/>
</dbReference>
<dbReference type="InterPro" id="IPR027417">
    <property type="entry name" value="P-loop_NTPase"/>
</dbReference>
<dbReference type="InterPro" id="IPR031322">
    <property type="entry name" value="Shikimate/glucono_kinase"/>
</dbReference>
<dbReference type="InterPro" id="IPR000623">
    <property type="entry name" value="Shikimate_kinase/TSH1"/>
</dbReference>
<dbReference type="InterPro" id="IPR027544">
    <property type="entry name" value="Shikimate_kinase_2"/>
</dbReference>
<dbReference type="InterPro" id="IPR023000">
    <property type="entry name" value="Shikimate_kinase_CS"/>
</dbReference>
<dbReference type="NCBIfam" id="NF002988">
    <property type="entry name" value="PRK03731.1"/>
    <property type="match status" value="1"/>
</dbReference>
<dbReference type="PANTHER" id="PTHR21087">
    <property type="entry name" value="SHIKIMATE KINASE"/>
    <property type="match status" value="1"/>
</dbReference>
<dbReference type="PANTHER" id="PTHR21087:SF21">
    <property type="entry name" value="SHIKIMATE KINASE 2"/>
    <property type="match status" value="1"/>
</dbReference>
<dbReference type="Pfam" id="PF01202">
    <property type="entry name" value="SKI"/>
    <property type="match status" value="1"/>
</dbReference>
<dbReference type="PRINTS" id="PR01100">
    <property type="entry name" value="SHIKIMTKNASE"/>
</dbReference>
<dbReference type="SUPFAM" id="SSF52540">
    <property type="entry name" value="P-loop containing nucleoside triphosphate hydrolases"/>
    <property type="match status" value="1"/>
</dbReference>
<dbReference type="PROSITE" id="PS01128">
    <property type="entry name" value="SHIKIMATE_KINASE"/>
    <property type="match status" value="1"/>
</dbReference>
<keyword id="KW-0028">Amino-acid biosynthesis</keyword>
<keyword id="KW-0057">Aromatic amino acid biosynthesis</keyword>
<keyword id="KW-0067">ATP-binding</keyword>
<keyword id="KW-0963">Cytoplasm</keyword>
<keyword id="KW-0418">Kinase</keyword>
<keyword id="KW-0460">Magnesium</keyword>
<keyword id="KW-0479">Metal-binding</keyword>
<keyword id="KW-0547">Nucleotide-binding</keyword>
<keyword id="KW-1185">Reference proteome</keyword>
<keyword id="KW-0808">Transferase</keyword>
<reference key="1">
    <citation type="journal article" date="2001" name="Nature">
        <title>Genome sequence of enterohaemorrhagic Escherichia coli O157:H7.</title>
        <authorList>
            <person name="Perna N.T."/>
            <person name="Plunkett G. III"/>
            <person name="Burland V."/>
            <person name="Mau B."/>
            <person name="Glasner J.D."/>
            <person name="Rose D.J."/>
            <person name="Mayhew G.F."/>
            <person name="Evans P.S."/>
            <person name="Gregor J."/>
            <person name="Kirkpatrick H.A."/>
            <person name="Posfai G."/>
            <person name="Hackett J."/>
            <person name="Klink S."/>
            <person name="Boutin A."/>
            <person name="Shao Y."/>
            <person name="Miller L."/>
            <person name="Grotbeck E.J."/>
            <person name="Davis N.W."/>
            <person name="Lim A."/>
            <person name="Dimalanta E.T."/>
            <person name="Potamousis K."/>
            <person name="Apodaca J."/>
            <person name="Anantharaman T.S."/>
            <person name="Lin J."/>
            <person name="Yen G."/>
            <person name="Schwartz D.C."/>
            <person name="Welch R.A."/>
            <person name="Blattner F.R."/>
        </authorList>
    </citation>
    <scope>NUCLEOTIDE SEQUENCE [LARGE SCALE GENOMIC DNA]</scope>
    <source>
        <strain>O157:H7 / EDL933 / ATCC 700927 / EHEC</strain>
    </source>
</reference>
<reference key="2">
    <citation type="journal article" date="2001" name="DNA Res.">
        <title>Complete genome sequence of enterohemorrhagic Escherichia coli O157:H7 and genomic comparison with a laboratory strain K-12.</title>
        <authorList>
            <person name="Hayashi T."/>
            <person name="Makino K."/>
            <person name="Ohnishi M."/>
            <person name="Kurokawa K."/>
            <person name="Ishii K."/>
            <person name="Yokoyama K."/>
            <person name="Han C.-G."/>
            <person name="Ohtsubo E."/>
            <person name="Nakayama K."/>
            <person name="Murata T."/>
            <person name="Tanaka M."/>
            <person name="Tobe T."/>
            <person name="Iida T."/>
            <person name="Takami H."/>
            <person name="Honda T."/>
            <person name="Sasakawa C."/>
            <person name="Ogasawara N."/>
            <person name="Yasunaga T."/>
            <person name="Kuhara S."/>
            <person name="Shiba T."/>
            <person name="Hattori M."/>
            <person name="Shinagawa H."/>
        </authorList>
    </citation>
    <scope>NUCLEOTIDE SEQUENCE [LARGE SCALE GENOMIC DNA]</scope>
    <source>
        <strain>O157:H7 / Sakai / RIMD 0509952 / EHEC</strain>
    </source>
</reference>
<feature type="initiator methionine" description="Removed" evidence="1">
    <location>
        <position position="1"/>
    </location>
</feature>
<feature type="chain" id="PRO_0000192380" description="Shikimate kinase 2">
    <location>
        <begin position="2"/>
        <end position="174"/>
    </location>
</feature>
<feature type="region of interest" description="LID domain">
    <location>
        <begin position="112"/>
        <end position="126"/>
    </location>
</feature>
<feature type="binding site" evidence="2">
    <location>
        <begin position="12"/>
        <end position="17"/>
    </location>
    <ligand>
        <name>ATP</name>
        <dbReference type="ChEBI" id="CHEBI:30616"/>
    </ligand>
</feature>
<feature type="binding site" evidence="2">
    <location>
        <position position="16"/>
    </location>
    <ligand>
        <name>Mg(2+)</name>
        <dbReference type="ChEBI" id="CHEBI:18420"/>
    </ligand>
</feature>
<feature type="binding site" evidence="2">
    <location>
        <position position="32"/>
    </location>
    <ligand>
        <name>Mg(2+)</name>
        <dbReference type="ChEBI" id="CHEBI:18420"/>
    </ligand>
</feature>
<feature type="binding site" evidence="2">
    <location>
        <position position="34"/>
    </location>
    <ligand>
        <name>substrate</name>
    </ligand>
</feature>
<feature type="binding site" evidence="2">
    <location>
        <position position="58"/>
    </location>
    <ligand>
        <name>substrate</name>
    </ligand>
</feature>
<feature type="binding site" evidence="2">
    <location>
        <position position="79"/>
    </location>
    <ligand>
        <name>substrate</name>
    </ligand>
</feature>
<feature type="binding site" evidence="2">
    <location>
        <position position="120"/>
    </location>
    <ligand>
        <name>ATP</name>
        <dbReference type="ChEBI" id="CHEBI:30616"/>
    </ligand>
</feature>
<feature type="binding site" evidence="2">
    <location>
        <position position="139"/>
    </location>
    <ligand>
        <name>substrate</name>
    </ligand>
</feature>